<evidence type="ECO:0000250" key="1"/>
<evidence type="ECO:0000305" key="2"/>
<dbReference type="EMBL" id="AC012463">
    <property type="protein sequence ID" value="AAF99787.1"/>
    <property type="status" value="ALT_SEQ"/>
    <property type="molecule type" value="Genomic_DNA"/>
</dbReference>
<dbReference type="EMBL" id="CP002684">
    <property type="protein sequence ID" value="AEE32220.1"/>
    <property type="molecule type" value="Genomic_DNA"/>
</dbReference>
<dbReference type="EMBL" id="BT003048">
    <property type="protein sequence ID" value="AAO23613.1"/>
    <property type="molecule type" value="mRNA"/>
</dbReference>
<dbReference type="EMBL" id="AK227317">
    <property type="protein sequence ID" value="BAE99331.1"/>
    <property type="molecule type" value="mRNA"/>
</dbReference>
<dbReference type="PIR" id="H96518">
    <property type="entry name" value="H96518"/>
</dbReference>
<dbReference type="RefSeq" id="NP_175219.1">
    <property type="nucleotide sequence ID" value="NM_103681.5"/>
</dbReference>
<dbReference type="SMR" id="Q84WL9"/>
<dbReference type="BioGRID" id="26424">
    <property type="interactions" value="7"/>
</dbReference>
<dbReference type="FunCoup" id="Q84WL9">
    <property type="interactions" value="3763"/>
</dbReference>
<dbReference type="IntAct" id="Q84WL9">
    <property type="interactions" value="1"/>
</dbReference>
<dbReference type="STRING" id="3702.Q84WL9"/>
<dbReference type="iPTMnet" id="Q84WL9"/>
<dbReference type="PaxDb" id="3702-AT1G47830.1"/>
<dbReference type="ProteomicsDB" id="244483"/>
<dbReference type="EnsemblPlants" id="AT1G47830.1">
    <property type="protein sequence ID" value="AT1G47830.1"/>
    <property type="gene ID" value="AT1G47830"/>
</dbReference>
<dbReference type="GeneID" id="841199"/>
<dbReference type="Gramene" id="AT1G47830.1">
    <property type="protein sequence ID" value="AT1G47830.1"/>
    <property type="gene ID" value="AT1G47830"/>
</dbReference>
<dbReference type="KEGG" id="ath:AT1G47830"/>
<dbReference type="Araport" id="AT1G47830"/>
<dbReference type="TAIR" id="AT1G47830">
    <property type="gene designation" value="AP2S"/>
</dbReference>
<dbReference type="eggNOG" id="KOG0935">
    <property type="taxonomic scope" value="Eukaryota"/>
</dbReference>
<dbReference type="HOGENOM" id="CLU_061221_3_2_1"/>
<dbReference type="InParanoid" id="Q84WL9"/>
<dbReference type="OMA" id="QSNFVEY"/>
<dbReference type="OrthoDB" id="371463at2759"/>
<dbReference type="PhylomeDB" id="Q84WL9"/>
<dbReference type="PRO" id="PR:Q84WL9"/>
<dbReference type="Proteomes" id="UP000006548">
    <property type="component" value="Chromosome 1"/>
</dbReference>
<dbReference type="ExpressionAtlas" id="Q84WL9">
    <property type="expression patterns" value="baseline and differential"/>
</dbReference>
<dbReference type="GO" id="GO:0030122">
    <property type="term" value="C:AP-2 adaptor complex"/>
    <property type="evidence" value="ECO:0007669"/>
    <property type="project" value="InterPro"/>
</dbReference>
<dbReference type="GO" id="GO:0005634">
    <property type="term" value="C:nucleus"/>
    <property type="evidence" value="ECO:0007005"/>
    <property type="project" value="TAIR"/>
</dbReference>
<dbReference type="GO" id="GO:0035615">
    <property type="term" value="F:clathrin adaptor activity"/>
    <property type="evidence" value="ECO:0007669"/>
    <property type="project" value="InterPro"/>
</dbReference>
<dbReference type="GO" id="GO:0072583">
    <property type="term" value="P:clathrin-dependent endocytosis"/>
    <property type="evidence" value="ECO:0007669"/>
    <property type="project" value="InterPro"/>
</dbReference>
<dbReference type="GO" id="GO:0015031">
    <property type="term" value="P:protein transport"/>
    <property type="evidence" value="ECO:0007669"/>
    <property type="project" value="UniProtKB-KW"/>
</dbReference>
<dbReference type="CDD" id="cd14833">
    <property type="entry name" value="AP2_sigma"/>
    <property type="match status" value="1"/>
</dbReference>
<dbReference type="FunFam" id="3.30.450.60:FF:000004">
    <property type="entry name" value="AP complex subunit sigma"/>
    <property type="match status" value="1"/>
</dbReference>
<dbReference type="Gene3D" id="3.30.450.60">
    <property type="match status" value="1"/>
</dbReference>
<dbReference type="InterPro" id="IPR016635">
    <property type="entry name" value="AP_complex_ssu"/>
</dbReference>
<dbReference type="InterPro" id="IPR022775">
    <property type="entry name" value="AP_mu_sigma_su"/>
</dbReference>
<dbReference type="InterPro" id="IPR027156">
    <property type="entry name" value="APS2"/>
</dbReference>
<dbReference type="InterPro" id="IPR011012">
    <property type="entry name" value="Longin-like_dom_sf"/>
</dbReference>
<dbReference type="PANTHER" id="PTHR11753">
    <property type="entry name" value="ADAPTOR COMPLEXES SMALL SUBUNIT FAMILY"/>
    <property type="match status" value="1"/>
</dbReference>
<dbReference type="Pfam" id="PF01217">
    <property type="entry name" value="Clat_adaptor_s"/>
    <property type="match status" value="1"/>
</dbReference>
<dbReference type="PIRSF" id="PIRSF015588">
    <property type="entry name" value="AP_complex_sigma"/>
    <property type="match status" value="1"/>
</dbReference>
<dbReference type="SUPFAM" id="SSF64356">
    <property type="entry name" value="SNARE-like"/>
    <property type="match status" value="1"/>
</dbReference>
<protein>
    <recommendedName>
        <fullName>AP-2 complex subunit sigma</fullName>
    </recommendedName>
    <alternativeName>
        <fullName>Adaptor AP-2 17 kDa protein</fullName>
    </alternativeName>
    <alternativeName>
        <fullName>Adaptor-related protein complex 2 subunit sigma</fullName>
    </alternativeName>
    <alternativeName>
        <fullName>Clathrin assembly protein 2 small chain</fullName>
    </alternativeName>
    <alternativeName>
        <fullName>Clathrin coat assembly protein AP17</fullName>
    </alternativeName>
    <alternativeName>
        <fullName>Clathrin coat-associated protein AP17</fullName>
    </alternativeName>
    <alternativeName>
        <fullName>Sigma2-adaptin</fullName>
    </alternativeName>
</protein>
<comment type="function">
    <text evidence="1">Subunit of the adaptor protein complex 2 (AP-2). Adaptor protein complexes function in protein transport via transport vesicles in different membrane traffic pathways. Adaptor protein complexes are vesicle coat components and appear to be involved in cargo selection and vesicle formation. AP-2 is involved in clathrin-dependent endocytosis in which cargo proteins are incorporated into vesicles surrounded by clathrin (clathrin-coated vesicles, CCVs) which are destined for fusion with the early endosome. The complex binds polyphosphoinositides (By similarity).</text>
</comment>
<comment type="subunit">
    <text evidence="1">Adaptor protein complex 2 (AP-2) is a heterotetramer composed of two large adaptins (alpha-type and beta-type subunits), a medium adaptin (mu-type subunit) and a small adaptin (sigma-type subunit).</text>
</comment>
<comment type="subcellular location">
    <subcellularLocation>
        <location>Cell membrane</location>
    </subcellularLocation>
    <subcellularLocation>
        <location evidence="1">Membrane</location>
        <location evidence="1">Coated pit</location>
        <topology evidence="1">Peripheral membrane protein</topology>
        <orientation evidence="1">Cytoplasmic side</orientation>
    </subcellularLocation>
    <text evidence="1">Component of the coat surrounding the cytoplasmic face of coated vesicles in the plasma membrane.</text>
</comment>
<comment type="similarity">
    <text evidence="2">Belongs to the adaptor complexes small subunit family.</text>
</comment>
<comment type="sequence caution" evidence="2">
    <conflict type="erroneous gene model prediction">
        <sequence resource="EMBL-CDS" id="AAF99787"/>
    </conflict>
</comment>
<sequence length="142" mass="17067">MIRFILLQNRQGKTRLAKYYVPLEESEKHKVEYEVHRLVVNRDAKFTNFVEFRTHKVIYRRYAGLFFSVCVDITDNELAYLESIHLFVEILDHFFSNVCELDLVFNFHKVYLILDEFILAGELQETSKRAIIERMSELEKLQ</sequence>
<proteinExistence type="evidence at transcript level"/>
<feature type="chain" id="PRO_0000397858" description="AP-2 complex subunit sigma">
    <location>
        <begin position="1"/>
        <end position="142"/>
    </location>
</feature>
<gene>
    <name type="primary">AP17</name>
    <name type="ordered locus">At1g47830</name>
    <name type="ORF">T2E6.6</name>
</gene>
<keyword id="KW-1003">Cell membrane</keyword>
<keyword id="KW-0168">Coated pit</keyword>
<keyword id="KW-0254">Endocytosis</keyword>
<keyword id="KW-0472">Membrane</keyword>
<keyword id="KW-0653">Protein transport</keyword>
<keyword id="KW-1185">Reference proteome</keyword>
<keyword id="KW-0813">Transport</keyword>
<name>AP2S_ARATH</name>
<accession>Q84WL9</accession>
<accession>Q9FZG3</accession>
<organism>
    <name type="scientific">Arabidopsis thaliana</name>
    <name type="common">Mouse-ear cress</name>
    <dbReference type="NCBI Taxonomy" id="3702"/>
    <lineage>
        <taxon>Eukaryota</taxon>
        <taxon>Viridiplantae</taxon>
        <taxon>Streptophyta</taxon>
        <taxon>Embryophyta</taxon>
        <taxon>Tracheophyta</taxon>
        <taxon>Spermatophyta</taxon>
        <taxon>Magnoliopsida</taxon>
        <taxon>eudicotyledons</taxon>
        <taxon>Gunneridae</taxon>
        <taxon>Pentapetalae</taxon>
        <taxon>rosids</taxon>
        <taxon>malvids</taxon>
        <taxon>Brassicales</taxon>
        <taxon>Brassicaceae</taxon>
        <taxon>Camelineae</taxon>
        <taxon>Arabidopsis</taxon>
    </lineage>
</organism>
<reference key="1">
    <citation type="journal article" date="2000" name="Nature">
        <title>Sequence and analysis of chromosome 1 of the plant Arabidopsis thaliana.</title>
        <authorList>
            <person name="Theologis A."/>
            <person name="Ecker J.R."/>
            <person name="Palm C.J."/>
            <person name="Federspiel N.A."/>
            <person name="Kaul S."/>
            <person name="White O."/>
            <person name="Alonso J."/>
            <person name="Altafi H."/>
            <person name="Araujo R."/>
            <person name="Bowman C.L."/>
            <person name="Brooks S.Y."/>
            <person name="Buehler E."/>
            <person name="Chan A."/>
            <person name="Chao Q."/>
            <person name="Chen H."/>
            <person name="Cheuk R.F."/>
            <person name="Chin C.W."/>
            <person name="Chung M.K."/>
            <person name="Conn L."/>
            <person name="Conway A.B."/>
            <person name="Conway A.R."/>
            <person name="Creasy T.H."/>
            <person name="Dewar K."/>
            <person name="Dunn P."/>
            <person name="Etgu P."/>
            <person name="Feldblyum T.V."/>
            <person name="Feng J.-D."/>
            <person name="Fong B."/>
            <person name="Fujii C.Y."/>
            <person name="Gill J.E."/>
            <person name="Goldsmith A.D."/>
            <person name="Haas B."/>
            <person name="Hansen N.F."/>
            <person name="Hughes B."/>
            <person name="Huizar L."/>
            <person name="Hunter J.L."/>
            <person name="Jenkins J."/>
            <person name="Johnson-Hopson C."/>
            <person name="Khan S."/>
            <person name="Khaykin E."/>
            <person name="Kim C.J."/>
            <person name="Koo H.L."/>
            <person name="Kremenetskaia I."/>
            <person name="Kurtz D.B."/>
            <person name="Kwan A."/>
            <person name="Lam B."/>
            <person name="Langin-Hooper S."/>
            <person name="Lee A."/>
            <person name="Lee J.M."/>
            <person name="Lenz C.A."/>
            <person name="Li J.H."/>
            <person name="Li Y.-P."/>
            <person name="Lin X."/>
            <person name="Liu S.X."/>
            <person name="Liu Z.A."/>
            <person name="Luros J.S."/>
            <person name="Maiti R."/>
            <person name="Marziali A."/>
            <person name="Militscher J."/>
            <person name="Miranda M."/>
            <person name="Nguyen M."/>
            <person name="Nierman W.C."/>
            <person name="Osborne B.I."/>
            <person name="Pai G."/>
            <person name="Peterson J."/>
            <person name="Pham P.K."/>
            <person name="Rizzo M."/>
            <person name="Rooney T."/>
            <person name="Rowley D."/>
            <person name="Sakano H."/>
            <person name="Salzberg S.L."/>
            <person name="Schwartz J.R."/>
            <person name="Shinn P."/>
            <person name="Southwick A.M."/>
            <person name="Sun H."/>
            <person name="Tallon L.J."/>
            <person name="Tambunga G."/>
            <person name="Toriumi M.J."/>
            <person name="Town C.D."/>
            <person name="Utterback T."/>
            <person name="Van Aken S."/>
            <person name="Vaysberg M."/>
            <person name="Vysotskaia V.S."/>
            <person name="Walker M."/>
            <person name="Wu D."/>
            <person name="Yu G."/>
            <person name="Fraser C.M."/>
            <person name="Venter J.C."/>
            <person name="Davis R.W."/>
        </authorList>
    </citation>
    <scope>NUCLEOTIDE SEQUENCE [LARGE SCALE GENOMIC DNA]</scope>
    <source>
        <strain>cv. Columbia</strain>
    </source>
</reference>
<reference key="2">
    <citation type="journal article" date="2017" name="Plant J.">
        <title>Araport11: a complete reannotation of the Arabidopsis thaliana reference genome.</title>
        <authorList>
            <person name="Cheng C.Y."/>
            <person name="Krishnakumar V."/>
            <person name="Chan A.P."/>
            <person name="Thibaud-Nissen F."/>
            <person name="Schobel S."/>
            <person name="Town C.D."/>
        </authorList>
    </citation>
    <scope>GENOME REANNOTATION</scope>
    <source>
        <strain>cv. Columbia</strain>
    </source>
</reference>
<reference key="3">
    <citation type="journal article" date="2003" name="Science">
        <title>Empirical analysis of transcriptional activity in the Arabidopsis genome.</title>
        <authorList>
            <person name="Yamada K."/>
            <person name="Lim J."/>
            <person name="Dale J.M."/>
            <person name="Chen H."/>
            <person name="Shinn P."/>
            <person name="Palm C.J."/>
            <person name="Southwick A.M."/>
            <person name="Wu H.C."/>
            <person name="Kim C.J."/>
            <person name="Nguyen M."/>
            <person name="Pham P.K."/>
            <person name="Cheuk R.F."/>
            <person name="Karlin-Newmann G."/>
            <person name="Liu S.X."/>
            <person name="Lam B."/>
            <person name="Sakano H."/>
            <person name="Wu T."/>
            <person name="Yu G."/>
            <person name="Miranda M."/>
            <person name="Quach H.L."/>
            <person name="Tripp M."/>
            <person name="Chang C.H."/>
            <person name="Lee J.M."/>
            <person name="Toriumi M.J."/>
            <person name="Chan M.M."/>
            <person name="Tang C.C."/>
            <person name="Onodera C.S."/>
            <person name="Deng J.M."/>
            <person name="Akiyama K."/>
            <person name="Ansari Y."/>
            <person name="Arakawa T."/>
            <person name="Banh J."/>
            <person name="Banno F."/>
            <person name="Bowser L."/>
            <person name="Brooks S.Y."/>
            <person name="Carninci P."/>
            <person name="Chao Q."/>
            <person name="Choy N."/>
            <person name="Enju A."/>
            <person name="Goldsmith A.D."/>
            <person name="Gurjal M."/>
            <person name="Hansen N.F."/>
            <person name="Hayashizaki Y."/>
            <person name="Johnson-Hopson C."/>
            <person name="Hsuan V.W."/>
            <person name="Iida K."/>
            <person name="Karnes M."/>
            <person name="Khan S."/>
            <person name="Koesema E."/>
            <person name="Ishida J."/>
            <person name="Jiang P.X."/>
            <person name="Jones T."/>
            <person name="Kawai J."/>
            <person name="Kamiya A."/>
            <person name="Meyers C."/>
            <person name="Nakajima M."/>
            <person name="Narusaka M."/>
            <person name="Seki M."/>
            <person name="Sakurai T."/>
            <person name="Satou M."/>
            <person name="Tamse R."/>
            <person name="Vaysberg M."/>
            <person name="Wallender E.K."/>
            <person name="Wong C."/>
            <person name="Yamamura Y."/>
            <person name="Yuan S."/>
            <person name="Shinozaki K."/>
            <person name="Davis R.W."/>
            <person name="Theologis A."/>
            <person name="Ecker J.R."/>
        </authorList>
    </citation>
    <scope>NUCLEOTIDE SEQUENCE [LARGE SCALE MRNA]</scope>
    <source>
        <strain>cv. Columbia</strain>
    </source>
</reference>
<reference key="4">
    <citation type="submission" date="2006-07" db="EMBL/GenBank/DDBJ databases">
        <title>Large-scale analysis of RIKEN Arabidopsis full-length (RAFL) cDNAs.</title>
        <authorList>
            <person name="Totoki Y."/>
            <person name="Seki M."/>
            <person name="Ishida J."/>
            <person name="Nakajima M."/>
            <person name="Enju A."/>
            <person name="Kamiya A."/>
            <person name="Narusaka M."/>
            <person name="Shin-i T."/>
            <person name="Nakagawa M."/>
            <person name="Sakamoto N."/>
            <person name="Oishi K."/>
            <person name="Kohara Y."/>
            <person name="Kobayashi M."/>
            <person name="Toyoda A."/>
            <person name="Sakaki Y."/>
            <person name="Sakurai T."/>
            <person name="Iida K."/>
            <person name="Akiyama K."/>
            <person name="Satou M."/>
            <person name="Toyoda T."/>
            <person name="Konagaya A."/>
            <person name="Carninci P."/>
            <person name="Kawai J."/>
            <person name="Hayashizaki Y."/>
            <person name="Shinozaki K."/>
        </authorList>
    </citation>
    <scope>NUCLEOTIDE SEQUENCE [LARGE SCALE MRNA]</scope>
    <source>
        <strain>cv. Columbia</strain>
    </source>
</reference>
<reference key="5">
    <citation type="journal article" date="2001" name="Mol. Biol. Cell">
        <title>Adaptins: the final recount.</title>
        <authorList>
            <person name="Boehm M."/>
            <person name="Bonifacino J.S."/>
        </authorList>
    </citation>
    <scope>GENE FAMILY</scope>
    <scope>REVIEW</scope>
</reference>